<reference key="1">
    <citation type="journal article" date="1993" name="Plant Mol. Biol.">
        <title>Genes of the R-phycocyanin II locus of marine Synechococcus spp., and comparison of protein-chromophore interactions in phycocyanins differing in bilin composition.</title>
        <authorList>
            <person name="de Lorimier R."/>
            <person name="Wilbanks S.M."/>
            <person name="Glazer A.N."/>
        </authorList>
    </citation>
    <scope>NUCLEOTIDE SEQUENCE [GENOMIC DNA]</scope>
</reference>
<name>RPCE_SYNPY</name>
<organism>
    <name type="scientific">Synechococcus sp. (strain WH8020)</name>
    <dbReference type="NCBI Taxonomy" id="32052"/>
    <lineage>
        <taxon>Bacteria</taxon>
        <taxon>Bacillati</taxon>
        <taxon>Cyanobacteriota</taxon>
        <taxon>Cyanophyceae</taxon>
        <taxon>Synechococcales</taxon>
        <taxon>Synechococcaceae</taxon>
        <taxon>Synechococcus</taxon>
    </lineage>
</organism>
<feature type="chain" id="PRO_0000199275" description="Bilin biosynthesis protein RpcE">
    <location>
        <begin position="1"/>
        <end position="265"/>
    </location>
</feature>
<evidence type="ECO:0000305" key="1"/>
<proteinExistence type="inferred from homology"/>
<keyword id="KW-0042">Antenna complex</keyword>
<keyword id="KW-0456">Lyase</keyword>
<keyword id="KW-0605">Phycobilisome</keyword>
<dbReference type="EMBL" id="M95288">
    <property type="protein sequence ID" value="AAA27348.1"/>
    <property type="molecule type" value="Genomic_DNA"/>
</dbReference>
<dbReference type="PIR" id="S31070">
    <property type="entry name" value="S31070"/>
</dbReference>
<dbReference type="RefSeq" id="WP_048347950.1">
    <property type="nucleotide sequence ID" value="NZ_CP011941.1"/>
</dbReference>
<dbReference type="SMR" id="Q02184"/>
<dbReference type="STRING" id="32052.WB44_13615"/>
<dbReference type="OrthoDB" id="454552at2"/>
<dbReference type="GO" id="GO:0030089">
    <property type="term" value="C:phycobilisome"/>
    <property type="evidence" value="ECO:0007669"/>
    <property type="project" value="UniProtKB-KW"/>
</dbReference>
<dbReference type="GO" id="GO:0016829">
    <property type="term" value="F:lyase activity"/>
    <property type="evidence" value="ECO:0007669"/>
    <property type="project" value="UniProtKB-KW"/>
</dbReference>
<dbReference type="GO" id="GO:0016491">
    <property type="term" value="F:oxidoreductase activity"/>
    <property type="evidence" value="ECO:0007669"/>
    <property type="project" value="TreeGrafter"/>
</dbReference>
<dbReference type="Gene3D" id="1.25.10.10">
    <property type="entry name" value="Leucine-rich Repeat Variant"/>
    <property type="match status" value="2"/>
</dbReference>
<dbReference type="InterPro" id="IPR011989">
    <property type="entry name" value="ARM-like"/>
</dbReference>
<dbReference type="InterPro" id="IPR016024">
    <property type="entry name" value="ARM-type_fold"/>
</dbReference>
<dbReference type="InterPro" id="IPR004155">
    <property type="entry name" value="PBS_lyase_HEAT"/>
</dbReference>
<dbReference type="PANTHER" id="PTHR12697:SF5">
    <property type="entry name" value="DEOXYHYPUSINE HYDROXYLASE"/>
    <property type="match status" value="1"/>
</dbReference>
<dbReference type="PANTHER" id="PTHR12697">
    <property type="entry name" value="PBS LYASE HEAT-LIKE PROTEIN"/>
    <property type="match status" value="1"/>
</dbReference>
<dbReference type="Pfam" id="PF13646">
    <property type="entry name" value="HEAT_2"/>
    <property type="match status" value="2"/>
</dbReference>
<dbReference type="Pfam" id="PF03130">
    <property type="entry name" value="HEAT_PBS"/>
    <property type="match status" value="1"/>
</dbReference>
<dbReference type="SMART" id="SM00567">
    <property type="entry name" value="EZ_HEAT"/>
    <property type="match status" value="5"/>
</dbReference>
<dbReference type="SUPFAM" id="SSF48371">
    <property type="entry name" value="ARM repeat"/>
    <property type="match status" value="1"/>
</dbReference>
<comment type="function">
    <text>An enzyme involved in the biosynthesis of bilin. Might be involved in the specific attachment of phycoerythrobilin (PEB) to the R-phycocyanin II beta chain.</text>
</comment>
<comment type="similarity">
    <text evidence="1">Belongs to the CpcE/RpcE/PecE family.</text>
</comment>
<protein>
    <recommendedName>
        <fullName>Bilin biosynthesis protein RpcE</fullName>
    </recommendedName>
</protein>
<accession>Q02184</accession>
<sequence>MQNPSAENSQPPLTEEQVIENLRQTEDFSDQYYAAWWLGRMRSRHPESLPLLLAALAPLHDNPIHDERRAVALNAIRALGILQARSAEEDLRSLLKNNDYSVREESARSLGMIQAKAAVQDLCELLSGAPDELEQAQSGSAKLKEPYESVLEALGSIGVASSSVITIIKPFTKHSRPLIRASALRALLLLTGEQAWAPPLIELLQHDDPLIRRGALLDLGATGWMPALPAIKAATVENSLKLVALRGLAEKSDDTTVLDAMDALL</sequence>
<gene>
    <name type="primary">rpcE</name>
</gene>